<gene>
    <name evidence="1" type="primary">ruvB</name>
    <name type="ordered locus">HP_1059</name>
</gene>
<comment type="function">
    <text evidence="1">The RuvA-RuvB-RuvC complex processes Holliday junction (HJ) DNA during genetic recombination and DNA repair, while the RuvA-RuvB complex plays an important role in the rescue of blocked DNA replication forks via replication fork reversal (RFR). RuvA specifically binds to HJ cruciform DNA, conferring on it an open structure. The RuvB hexamer acts as an ATP-dependent pump, pulling dsDNA into and through the RuvAB complex. RuvB forms 2 homohexamers on either side of HJ DNA bound by 1 or 2 RuvA tetramers; 4 subunits per hexamer contact DNA at a time. Coordinated motions by a converter formed by DNA-disengaged RuvB subunits stimulates ATP hydrolysis and nucleotide exchange. Immobilization of the converter enables RuvB to convert the ATP-contained energy into a lever motion, pulling 2 nucleotides of DNA out of the RuvA tetramer per ATP hydrolyzed, thus driving DNA branch migration. The RuvB motors rotate together with the DNA substrate, which together with the progressing nucleotide cycle form the mechanistic basis for DNA recombination by continuous HJ branch migration. Branch migration allows RuvC to scan DNA until it finds its consensus sequence, where it cleaves and resolves cruciform DNA.</text>
</comment>
<comment type="catalytic activity">
    <reaction evidence="1">
        <text>ATP + H2O = ADP + phosphate + H(+)</text>
        <dbReference type="Rhea" id="RHEA:13065"/>
        <dbReference type="ChEBI" id="CHEBI:15377"/>
        <dbReference type="ChEBI" id="CHEBI:15378"/>
        <dbReference type="ChEBI" id="CHEBI:30616"/>
        <dbReference type="ChEBI" id="CHEBI:43474"/>
        <dbReference type="ChEBI" id="CHEBI:456216"/>
    </reaction>
</comment>
<comment type="subunit">
    <text evidence="1">Homohexamer. Forms an RuvA(8)-RuvB(12)-Holliday junction (HJ) complex. HJ DNA is sandwiched between 2 RuvA tetramers; dsDNA enters through RuvA and exits via RuvB. An RuvB hexamer assembles on each DNA strand where it exits the tetramer. Each RuvB hexamer is contacted by two RuvA subunits (via domain III) on 2 adjacent RuvB subunits; this complex drives branch migration. In the full resolvosome a probable DNA-RuvA(4)-RuvB(12)-RuvC(2) complex forms which resolves the HJ.</text>
</comment>
<comment type="subcellular location">
    <subcellularLocation>
        <location evidence="1">Cytoplasm</location>
    </subcellularLocation>
</comment>
<comment type="domain">
    <text evidence="1">Has 3 domains, the large (RuvB-L) and small ATPase (RuvB-S) domains and the C-terminal head (RuvB-H) domain. The head domain binds DNA, while the ATPase domains jointly bind ATP, ADP or are empty depending on the state of the subunit in the translocation cycle. During a single DNA translocation step the structure of each domain remains the same, but their relative positions change.</text>
</comment>
<comment type="similarity">
    <text evidence="1">Belongs to the RuvB family.</text>
</comment>
<proteinExistence type="inferred from homology"/>
<evidence type="ECO:0000255" key="1">
    <source>
        <dbReference type="HAMAP-Rule" id="MF_00016"/>
    </source>
</evidence>
<feature type="chain" id="PRO_0000165540" description="Holliday junction branch migration complex subunit RuvB">
    <location>
        <begin position="1"/>
        <end position="336"/>
    </location>
</feature>
<feature type="region of interest" description="Large ATPase domain (RuvB-L)" evidence="1">
    <location>
        <begin position="1"/>
        <end position="182"/>
    </location>
</feature>
<feature type="region of interest" description="Small ATPAse domain (RuvB-S)" evidence="1">
    <location>
        <begin position="183"/>
        <end position="253"/>
    </location>
</feature>
<feature type="region of interest" description="Head domain (RuvB-H)" evidence="1">
    <location>
        <begin position="256"/>
        <end position="336"/>
    </location>
</feature>
<feature type="binding site" evidence="1">
    <location>
        <position position="21"/>
    </location>
    <ligand>
        <name>ATP</name>
        <dbReference type="ChEBI" id="CHEBI:30616"/>
    </ligand>
</feature>
<feature type="binding site" evidence="1">
    <location>
        <position position="22"/>
    </location>
    <ligand>
        <name>ATP</name>
        <dbReference type="ChEBI" id="CHEBI:30616"/>
    </ligand>
</feature>
<feature type="binding site" evidence="1">
    <location>
        <position position="63"/>
    </location>
    <ligand>
        <name>ATP</name>
        <dbReference type="ChEBI" id="CHEBI:30616"/>
    </ligand>
</feature>
<feature type="binding site" evidence="1">
    <location>
        <position position="66"/>
    </location>
    <ligand>
        <name>ATP</name>
        <dbReference type="ChEBI" id="CHEBI:30616"/>
    </ligand>
</feature>
<feature type="binding site" evidence="1">
    <location>
        <position position="67"/>
    </location>
    <ligand>
        <name>ATP</name>
        <dbReference type="ChEBI" id="CHEBI:30616"/>
    </ligand>
</feature>
<feature type="binding site" evidence="1">
    <location>
        <position position="67"/>
    </location>
    <ligand>
        <name>Mg(2+)</name>
        <dbReference type="ChEBI" id="CHEBI:18420"/>
    </ligand>
</feature>
<feature type="binding site" evidence="1">
    <location>
        <position position="68"/>
    </location>
    <ligand>
        <name>ATP</name>
        <dbReference type="ChEBI" id="CHEBI:30616"/>
    </ligand>
</feature>
<feature type="binding site" evidence="1">
    <location>
        <begin position="129"/>
        <end position="131"/>
    </location>
    <ligand>
        <name>ATP</name>
        <dbReference type="ChEBI" id="CHEBI:30616"/>
    </ligand>
</feature>
<feature type="binding site" evidence="1">
    <location>
        <position position="172"/>
    </location>
    <ligand>
        <name>ATP</name>
        <dbReference type="ChEBI" id="CHEBI:30616"/>
    </ligand>
</feature>
<feature type="binding site" evidence="1">
    <location>
        <position position="182"/>
    </location>
    <ligand>
        <name>ATP</name>
        <dbReference type="ChEBI" id="CHEBI:30616"/>
    </ligand>
</feature>
<feature type="binding site" evidence="1">
    <location>
        <position position="219"/>
    </location>
    <ligand>
        <name>ATP</name>
        <dbReference type="ChEBI" id="CHEBI:30616"/>
    </ligand>
</feature>
<feature type="binding site" evidence="1">
    <location>
        <position position="310"/>
    </location>
    <ligand>
        <name>DNA</name>
        <dbReference type="ChEBI" id="CHEBI:16991"/>
    </ligand>
</feature>
<feature type="binding site" evidence="1">
    <location>
        <position position="315"/>
    </location>
    <ligand>
        <name>DNA</name>
        <dbReference type="ChEBI" id="CHEBI:16991"/>
    </ligand>
</feature>
<reference key="1">
    <citation type="journal article" date="1997" name="Nature">
        <title>The complete genome sequence of the gastric pathogen Helicobacter pylori.</title>
        <authorList>
            <person name="Tomb J.-F."/>
            <person name="White O."/>
            <person name="Kerlavage A.R."/>
            <person name="Clayton R.A."/>
            <person name="Sutton G.G."/>
            <person name="Fleischmann R.D."/>
            <person name="Ketchum K.A."/>
            <person name="Klenk H.-P."/>
            <person name="Gill S.R."/>
            <person name="Dougherty B.A."/>
            <person name="Nelson K.E."/>
            <person name="Quackenbush J."/>
            <person name="Zhou L."/>
            <person name="Kirkness E.F."/>
            <person name="Peterson S.N."/>
            <person name="Loftus B.J."/>
            <person name="Richardson D.L."/>
            <person name="Dodson R.J."/>
            <person name="Khalak H.G."/>
            <person name="Glodek A."/>
            <person name="McKenney K."/>
            <person name="FitzGerald L.M."/>
            <person name="Lee N."/>
            <person name="Adams M.D."/>
            <person name="Hickey E.K."/>
            <person name="Berg D.E."/>
            <person name="Gocayne J.D."/>
            <person name="Utterback T.R."/>
            <person name="Peterson J.D."/>
            <person name="Kelley J.M."/>
            <person name="Cotton M.D."/>
            <person name="Weidman J.F."/>
            <person name="Fujii C."/>
            <person name="Bowman C."/>
            <person name="Watthey L."/>
            <person name="Wallin E."/>
            <person name="Hayes W.S."/>
            <person name="Borodovsky M."/>
            <person name="Karp P.D."/>
            <person name="Smith H.O."/>
            <person name="Fraser C.M."/>
            <person name="Venter J.C."/>
        </authorList>
    </citation>
    <scope>NUCLEOTIDE SEQUENCE [LARGE SCALE GENOMIC DNA]</scope>
    <source>
        <strain>ATCC 700392 / 26695</strain>
    </source>
</reference>
<keyword id="KW-0067">ATP-binding</keyword>
<keyword id="KW-0963">Cytoplasm</keyword>
<keyword id="KW-0227">DNA damage</keyword>
<keyword id="KW-0233">DNA recombination</keyword>
<keyword id="KW-0234">DNA repair</keyword>
<keyword id="KW-0238">DNA-binding</keyword>
<keyword id="KW-0378">Hydrolase</keyword>
<keyword id="KW-0547">Nucleotide-binding</keyword>
<keyword id="KW-1185">Reference proteome</keyword>
<dbReference type="EC" id="3.6.4.-" evidence="1"/>
<dbReference type="EMBL" id="AE000511">
    <property type="protein sequence ID" value="AAD08100.1"/>
    <property type="molecule type" value="Genomic_DNA"/>
</dbReference>
<dbReference type="PIR" id="C64652">
    <property type="entry name" value="C64652"/>
</dbReference>
<dbReference type="RefSeq" id="NP_207850.1">
    <property type="nucleotide sequence ID" value="NC_000915.1"/>
</dbReference>
<dbReference type="RefSeq" id="WP_000664449.1">
    <property type="nucleotide sequence ID" value="NC_018939.1"/>
</dbReference>
<dbReference type="SMR" id="O25699"/>
<dbReference type="FunCoup" id="O25699">
    <property type="interactions" value="184"/>
</dbReference>
<dbReference type="STRING" id="85962.HP_1059"/>
<dbReference type="PaxDb" id="85962-C694_05475"/>
<dbReference type="EnsemblBacteria" id="AAD08100">
    <property type="protein sequence ID" value="AAD08100"/>
    <property type="gene ID" value="HP_1059"/>
</dbReference>
<dbReference type="KEGG" id="heo:C694_05475"/>
<dbReference type="KEGG" id="hpy:HP_1059"/>
<dbReference type="PATRIC" id="fig|85962.47.peg.1138"/>
<dbReference type="eggNOG" id="COG2255">
    <property type="taxonomic scope" value="Bacteria"/>
</dbReference>
<dbReference type="InParanoid" id="O25699"/>
<dbReference type="OrthoDB" id="9804478at2"/>
<dbReference type="PhylomeDB" id="O25699"/>
<dbReference type="Proteomes" id="UP000000429">
    <property type="component" value="Chromosome"/>
</dbReference>
<dbReference type="GO" id="GO:0005737">
    <property type="term" value="C:cytoplasm"/>
    <property type="evidence" value="ECO:0007669"/>
    <property type="project" value="UniProtKB-SubCell"/>
</dbReference>
<dbReference type="GO" id="GO:0048476">
    <property type="term" value="C:Holliday junction resolvase complex"/>
    <property type="evidence" value="ECO:0007669"/>
    <property type="project" value="UniProtKB-UniRule"/>
</dbReference>
<dbReference type="GO" id="GO:0005524">
    <property type="term" value="F:ATP binding"/>
    <property type="evidence" value="ECO:0007669"/>
    <property type="project" value="UniProtKB-UniRule"/>
</dbReference>
<dbReference type="GO" id="GO:0016887">
    <property type="term" value="F:ATP hydrolysis activity"/>
    <property type="evidence" value="ECO:0007669"/>
    <property type="project" value="InterPro"/>
</dbReference>
<dbReference type="GO" id="GO:0000400">
    <property type="term" value="F:four-way junction DNA binding"/>
    <property type="evidence" value="ECO:0007669"/>
    <property type="project" value="UniProtKB-UniRule"/>
</dbReference>
<dbReference type="GO" id="GO:0009378">
    <property type="term" value="F:four-way junction helicase activity"/>
    <property type="evidence" value="ECO:0007669"/>
    <property type="project" value="InterPro"/>
</dbReference>
<dbReference type="GO" id="GO:0006310">
    <property type="term" value="P:DNA recombination"/>
    <property type="evidence" value="ECO:0007669"/>
    <property type="project" value="UniProtKB-UniRule"/>
</dbReference>
<dbReference type="GO" id="GO:0006281">
    <property type="term" value="P:DNA repair"/>
    <property type="evidence" value="ECO:0007669"/>
    <property type="project" value="UniProtKB-UniRule"/>
</dbReference>
<dbReference type="CDD" id="cd00009">
    <property type="entry name" value="AAA"/>
    <property type="match status" value="1"/>
</dbReference>
<dbReference type="Gene3D" id="1.10.8.60">
    <property type="match status" value="1"/>
</dbReference>
<dbReference type="Gene3D" id="3.40.50.300">
    <property type="entry name" value="P-loop containing nucleotide triphosphate hydrolases"/>
    <property type="match status" value="1"/>
</dbReference>
<dbReference type="Gene3D" id="1.10.10.10">
    <property type="entry name" value="Winged helix-like DNA-binding domain superfamily/Winged helix DNA-binding domain"/>
    <property type="match status" value="1"/>
</dbReference>
<dbReference type="HAMAP" id="MF_00016">
    <property type="entry name" value="DNA_HJ_migration_RuvB"/>
    <property type="match status" value="1"/>
</dbReference>
<dbReference type="InterPro" id="IPR003593">
    <property type="entry name" value="AAA+_ATPase"/>
</dbReference>
<dbReference type="InterPro" id="IPR041445">
    <property type="entry name" value="AAA_lid_4"/>
</dbReference>
<dbReference type="InterPro" id="IPR004605">
    <property type="entry name" value="DNA_helicase_Holl-junc_RuvB"/>
</dbReference>
<dbReference type="InterPro" id="IPR027417">
    <property type="entry name" value="P-loop_NTPase"/>
</dbReference>
<dbReference type="InterPro" id="IPR008824">
    <property type="entry name" value="RuvB-like_N"/>
</dbReference>
<dbReference type="InterPro" id="IPR008823">
    <property type="entry name" value="RuvB_C"/>
</dbReference>
<dbReference type="InterPro" id="IPR036388">
    <property type="entry name" value="WH-like_DNA-bd_sf"/>
</dbReference>
<dbReference type="InterPro" id="IPR036390">
    <property type="entry name" value="WH_DNA-bd_sf"/>
</dbReference>
<dbReference type="NCBIfam" id="NF000868">
    <property type="entry name" value="PRK00080.1"/>
    <property type="match status" value="1"/>
</dbReference>
<dbReference type="NCBIfam" id="TIGR00635">
    <property type="entry name" value="ruvB"/>
    <property type="match status" value="1"/>
</dbReference>
<dbReference type="PANTHER" id="PTHR42848">
    <property type="match status" value="1"/>
</dbReference>
<dbReference type="PANTHER" id="PTHR42848:SF1">
    <property type="entry name" value="HOLLIDAY JUNCTION BRANCH MIGRATION COMPLEX SUBUNIT RUVB"/>
    <property type="match status" value="1"/>
</dbReference>
<dbReference type="Pfam" id="PF17864">
    <property type="entry name" value="AAA_lid_4"/>
    <property type="match status" value="1"/>
</dbReference>
<dbReference type="Pfam" id="PF05491">
    <property type="entry name" value="RuvB_C"/>
    <property type="match status" value="1"/>
</dbReference>
<dbReference type="Pfam" id="PF05496">
    <property type="entry name" value="RuvB_N"/>
    <property type="match status" value="1"/>
</dbReference>
<dbReference type="SMART" id="SM00382">
    <property type="entry name" value="AAA"/>
    <property type="match status" value="1"/>
</dbReference>
<dbReference type="SUPFAM" id="SSF52540">
    <property type="entry name" value="P-loop containing nucleoside triphosphate hydrolases"/>
    <property type="match status" value="1"/>
</dbReference>
<dbReference type="SUPFAM" id="SSF46785">
    <property type="entry name" value="Winged helix' DNA-binding domain"/>
    <property type="match status" value="1"/>
</dbReference>
<name>RUVB_HELPY</name>
<sequence>MKERIVNLETLDFEISQEVSLRPSLWEDFIGQEKIKSNLQISICAAKKRQESLDHMLFFGPPGLGKTSISHIIAKEMETNIKITAAPMIEKSGDLAAILTNLQAKDILFIDEIHRLSPAIEEVLYPAMEDFRLDIIIGSGPAAQTIKIDLPPFTLIGATTRAGMLSNPLRDRFGMSFRMQFYNPSELALIIKKAAVKLNQDIKQESADEIAKRSRGTPRIALRLLKRVRDFALVKNSSLMDLNITLHALNELGVNELGFDEADLAYLSLLANAQGKPVGLNTIAASMREDEGTIEDVIEPFLLANGYLERTAKGRIATPKTHELLKIPTLNPQTLF</sequence>
<accession>O25699</accession>
<protein>
    <recommendedName>
        <fullName evidence="1">Holliday junction branch migration complex subunit RuvB</fullName>
        <ecNumber evidence="1">3.6.4.-</ecNumber>
    </recommendedName>
</protein>
<organism>
    <name type="scientific">Helicobacter pylori (strain ATCC 700392 / 26695)</name>
    <name type="common">Campylobacter pylori</name>
    <dbReference type="NCBI Taxonomy" id="85962"/>
    <lineage>
        <taxon>Bacteria</taxon>
        <taxon>Pseudomonadati</taxon>
        <taxon>Campylobacterota</taxon>
        <taxon>Epsilonproteobacteria</taxon>
        <taxon>Campylobacterales</taxon>
        <taxon>Helicobacteraceae</taxon>
        <taxon>Helicobacter</taxon>
    </lineage>
</organism>